<evidence type="ECO:0000256" key="1">
    <source>
        <dbReference type="SAM" id="MobiDB-lite"/>
    </source>
</evidence>
<evidence type="ECO:0000269" key="2">
    <source>
    </source>
</evidence>
<evidence type="ECO:0000305" key="3"/>
<sequence length="253" mass="28499">MIVHQQLPMSVNVASLDFLLIELVHTAKRLAEDRKKKSSSEKSIESDFQMLESIGFQVGRKITERLLLNRNRITETTDVMRFLCRELWPIVFRKPLDNLKTNRRGIFVLTDTYFYWFTKMTAMTGTEMAQITTPYFYFPSGFIRGVVYTFGYSAQVIAQCPNLPTCIFHVKFSPNPTQTSPGKPSTSESSQTDTSTRPANSQTPTTTRASSYTTLVSTSNQVSNEAEASAVETSANQAQNTEDATENEDRLPS</sequence>
<proteinExistence type="evidence at protein level"/>
<comment type="similarity">
    <text evidence="3">Belongs to the TRAPP small subunits family. BET3 subfamily.</text>
</comment>
<feature type="chain" id="PRO_0000211590" description="Uncharacterized protein C13G6.05c">
    <location>
        <begin position="1"/>
        <end position="253"/>
    </location>
</feature>
<feature type="region of interest" description="Disordered" evidence="1">
    <location>
        <begin position="175"/>
        <end position="253"/>
    </location>
</feature>
<feature type="compositionally biased region" description="Polar residues" evidence="1">
    <location>
        <begin position="175"/>
        <end position="184"/>
    </location>
</feature>
<feature type="compositionally biased region" description="Low complexity" evidence="1">
    <location>
        <begin position="185"/>
        <end position="196"/>
    </location>
</feature>
<feature type="compositionally biased region" description="Low complexity" evidence="1">
    <location>
        <begin position="203"/>
        <end position="214"/>
    </location>
</feature>
<feature type="compositionally biased region" description="Polar residues" evidence="1">
    <location>
        <begin position="215"/>
        <end position="242"/>
    </location>
</feature>
<feature type="modified residue" description="Phosphoserine" evidence="2">
    <location>
        <position position="180"/>
    </location>
</feature>
<accession>Q09784</accession>
<reference key="1">
    <citation type="journal article" date="2002" name="Nature">
        <title>The genome sequence of Schizosaccharomyces pombe.</title>
        <authorList>
            <person name="Wood V."/>
            <person name="Gwilliam R."/>
            <person name="Rajandream M.A."/>
            <person name="Lyne M.H."/>
            <person name="Lyne R."/>
            <person name="Stewart A."/>
            <person name="Sgouros J.G."/>
            <person name="Peat N."/>
            <person name="Hayles J."/>
            <person name="Baker S.G."/>
            <person name="Basham D."/>
            <person name="Bowman S."/>
            <person name="Brooks K."/>
            <person name="Brown D."/>
            <person name="Brown S."/>
            <person name="Chillingworth T."/>
            <person name="Churcher C.M."/>
            <person name="Collins M."/>
            <person name="Connor R."/>
            <person name="Cronin A."/>
            <person name="Davis P."/>
            <person name="Feltwell T."/>
            <person name="Fraser A."/>
            <person name="Gentles S."/>
            <person name="Goble A."/>
            <person name="Hamlin N."/>
            <person name="Harris D.E."/>
            <person name="Hidalgo J."/>
            <person name="Hodgson G."/>
            <person name="Holroyd S."/>
            <person name="Hornsby T."/>
            <person name="Howarth S."/>
            <person name="Huckle E.J."/>
            <person name="Hunt S."/>
            <person name="Jagels K."/>
            <person name="James K.D."/>
            <person name="Jones L."/>
            <person name="Jones M."/>
            <person name="Leather S."/>
            <person name="McDonald S."/>
            <person name="McLean J."/>
            <person name="Mooney P."/>
            <person name="Moule S."/>
            <person name="Mungall K.L."/>
            <person name="Murphy L.D."/>
            <person name="Niblett D."/>
            <person name="Odell C."/>
            <person name="Oliver K."/>
            <person name="O'Neil S."/>
            <person name="Pearson D."/>
            <person name="Quail M.A."/>
            <person name="Rabbinowitsch E."/>
            <person name="Rutherford K.M."/>
            <person name="Rutter S."/>
            <person name="Saunders D."/>
            <person name="Seeger K."/>
            <person name="Sharp S."/>
            <person name="Skelton J."/>
            <person name="Simmonds M.N."/>
            <person name="Squares R."/>
            <person name="Squares S."/>
            <person name="Stevens K."/>
            <person name="Taylor K."/>
            <person name="Taylor R.G."/>
            <person name="Tivey A."/>
            <person name="Walsh S.V."/>
            <person name="Warren T."/>
            <person name="Whitehead S."/>
            <person name="Woodward J.R."/>
            <person name="Volckaert G."/>
            <person name="Aert R."/>
            <person name="Robben J."/>
            <person name="Grymonprez B."/>
            <person name="Weltjens I."/>
            <person name="Vanstreels E."/>
            <person name="Rieger M."/>
            <person name="Schaefer M."/>
            <person name="Mueller-Auer S."/>
            <person name="Gabel C."/>
            <person name="Fuchs M."/>
            <person name="Duesterhoeft A."/>
            <person name="Fritzc C."/>
            <person name="Holzer E."/>
            <person name="Moestl D."/>
            <person name="Hilbert H."/>
            <person name="Borzym K."/>
            <person name="Langer I."/>
            <person name="Beck A."/>
            <person name="Lehrach H."/>
            <person name="Reinhardt R."/>
            <person name="Pohl T.M."/>
            <person name="Eger P."/>
            <person name="Zimmermann W."/>
            <person name="Wedler H."/>
            <person name="Wambutt R."/>
            <person name="Purnelle B."/>
            <person name="Goffeau A."/>
            <person name="Cadieu E."/>
            <person name="Dreano S."/>
            <person name="Gloux S."/>
            <person name="Lelaure V."/>
            <person name="Mottier S."/>
            <person name="Galibert F."/>
            <person name="Aves S.J."/>
            <person name="Xiang Z."/>
            <person name="Hunt C."/>
            <person name="Moore K."/>
            <person name="Hurst S.M."/>
            <person name="Lucas M."/>
            <person name="Rochet M."/>
            <person name="Gaillardin C."/>
            <person name="Tallada V.A."/>
            <person name="Garzon A."/>
            <person name="Thode G."/>
            <person name="Daga R.R."/>
            <person name="Cruzado L."/>
            <person name="Jimenez J."/>
            <person name="Sanchez M."/>
            <person name="del Rey F."/>
            <person name="Benito J."/>
            <person name="Dominguez A."/>
            <person name="Revuelta J.L."/>
            <person name="Moreno S."/>
            <person name="Armstrong J."/>
            <person name="Forsburg S.L."/>
            <person name="Cerutti L."/>
            <person name="Lowe T."/>
            <person name="McCombie W.R."/>
            <person name="Paulsen I."/>
            <person name="Potashkin J."/>
            <person name="Shpakovski G.V."/>
            <person name="Ussery D."/>
            <person name="Barrell B.G."/>
            <person name="Nurse P."/>
        </authorList>
    </citation>
    <scope>NUCLEOTIDE SEQUENCE [LARGE SCALE GENOMIC DNA]</scope>
    <source>
        <strain>972 / ATCC 24843</strain>
    </source>
</reference>
<reference key="2">
    <citation type="journal article" date="2011" name="Science">
        <title>Comparative functional genomics of the fission yeasts.</title>
        <authorList>
            <person name="Rhind N."/>
            <person name="Chen Z."/>
            <person name="Yassour M."/>
            <person name="Thompson D.A."/>
            <person name="Haas B.J."/>
            <person name="Habib N."/>
            <person name="Wapinski I."/>
            <person name="Roy S."/>
            <person name="Lin M.F."/>
            <person name="Heiman D.I."/>
            <person name="Young S.K."/>
            <person name="Furuya K."/>
            <person name="Guo Y."/>
            <person name="Pidoux A."/>
            <person name="Chen H.M."/>
            <person name="Robbertse B."/>
            <person name="Goldberg J.M."/>
            <person name="Aoki K."/>
            <person name="Bayne E.H."/>
            <person name="Berlin A.M."/>
            <person name="Desjardins C.A."/>
            <person name="Dobbs E."/>
            <person name="Dukaj L."/>
            <person name="Fan L."/>
            <person name="FitzGerald M.G."/>
            <person name="French C."/>
            <person name="Gujja S."/>
            <person name="Hansen K."/>
            <person name="Keifenheim D."/>
            <person name="Levin J.Z."/>
            <person name="Mosher R.A."/>
            <person name="Mueller C.A."/>
            <person name="Pfiffner J."/>
            <person name="Priest M."/>
            <person name="Russ C."/>
            <person name="Smialowska A."/>
            <person name="Swoboda P."/>
            <person name="Sykes S.M."/>
            <person name="Vaughn M."/>
            <person name="Vengrova S."/>
            <person name="Yoder R."/>
            <person name="Zeng Q."/>
            <person name="Allshire R."/>
            <person name="Baulcombe D."/>
            <person name="Birren B.W."/>
            <person name="Brown W."/>
            <person name="Ekwall K."/>
            <person name="Kellis M."/>
            <person name="Leatherwood J."/>
            <person name="Levin H."/>
            <person name="Margalit H."/>
            <person name="Martienssen R."/>
            <person name="Nieduszynski C.A."/>
            <person name="Spatafora J.W."/>
            <person name="Friedman N."/>
            <person name="Dalgaard J.Z."/>
            <person name="Baumann P."/>
            <person name="Niki H."/>
            <person name="Regev A."/>
            <person name="Nusbaum C."/>
        </authorList>
    </citation>
    <scope>REVISION OF GENE MODEL</scope>
</reference>
<reference key="3">
    <citation type="journal article" date="2008" name="J. Proteome Res.">
        <title>Phosphoproteome analysis of fission yeast.</title>
        <authorList>
            <person name="Wilson-Grady J.T."/>
            <person name="Villen J."/>
            <person name="Gygi S.P."/>
        </authorList>
    </citation>
    <scope>PHOSPHORYLATION [LARGE SCALE ANALYSIS] AT SER-180</scope>
    <scope>IDENTIFICATION BY MASS SPECTROMETRY</scope>
</reference>
<name>YA95_SCHPO</name>
<keyword id="KW-0597">Phosphoprotein</keyword>
<keyword id="KW-1185">Reference proteome</keyword>
<protein>
    <recommendedName>
        <fullName>Uncharacterized protein C13G6.05c</fullName>
    </recommendedName>
</protein>
<organism>
    <name type="scientific">Schizosaccharomyces pombe (strain 972 / ATCC 24843)</name>
    <name type="common">Fission yeast</name>
    <dbReference type="NCBI Taxonomy" id="284812"/>
    <lineage>
        <taxon>Eukaryota</taxon>
        <taxon>Fungi</taxon>
        <taxon>Dikarya</taxon>
        <taxon>Ascomycota</taxon>
        <taxon>Taphrinomycotina</taxon>
        <taxon>Schizosaccharomycetes</taxon>
        <taxon>Schizosaccharomycetales</taxon>
        <taxon>Schizosaccharomycetaceae</taxon>
        <taxon>Schizosaccharomyces</taxon>
    </lineage>
</organism>
<dbReference type="EMBL" id="CU329670">
    <property type="protein sequence ID" value="CAA91098.4"/>
    <property type="molecule type" value="Genomic_DNA"/>
</dbReference>
<dbReference type="PIR" id="T37640">
    <property type="entry name" value="T37640"/>
</dbReference>
<dbReference type="SMR" id="Q09784"/>
<dbReference type="FunCoup" id="Q09784">
    <property type="interactions" value="20"/>
</dbReference>
<dbReference type="STRING" id="284812.Q09784"/>
<dbReference type="iPTMnet" id="Q09784"/>
<dbReference type="PaxDb" id="4896-SPAC13G6.05c.1"/>
<dbReference type="EnsemblFungi" id="SPAC13G6.05c.1">
    <property type="protein sequence ID" value="SPAC13G6.05c.1:pep"/>
    <property type="gene ID" value="SPAC13G6.05c"/>
</dbReference>
<dbReference type="KEGG" id="spo:2542905"/>
<dbReference type="PomBase" id="SPAC13G6.05c"/>
<dbReference type="VEuPathDB" id="FungiDB:SPAC13G6.05c"/>
<dbReference type="eggNOG" id="KOG3316">
    <property type="taxonomic scope" value="Eukaryota"/>
</dbReference>
<dbReference type="HOGENOM" id="CLU_076409_1_0_1"/>
<dbReference type="InParanoid" id="Q09784"/>
<dbReference type="OMA" id="FTERIMI"/>
<dbReference type="Reactome" id="R-SPO-204005">
    <property type="pathway name" value="COPII-mediated vesicle transport"/>
</dbReference>
<dbReference type="Reactome" id="R-SPO-8876198">
    <property type="pathway name" value="RAB GEFs exchange GTP for GDP on RABs"/>
</dbReference>
<dbReference type="PRO" id="PR:Q09784"/>
<dbReference type="Proteomes" id="UP000002485">
    <property type="component" value="Chromosome I"/>
</dbReference>
<dbReference type="GO" id="GO:0005801">
    <property type="term" value="C:cis-Golgi network"/>
    <property type="evidence" value="ECO:0000318"/>
    <property type="project" value="GO_Central"/>
</dbReference>
<dbReference type="GO" id="GO:0005802">
    <property type="term" value="C:trans-Golgi network"/>
    <property type="evidence" value="ECO:0000318"/>
    <property type="project" value="GO_Central"/>
</dbReference>
<dbReference type="GO" id="GO:0030008">
    <property type="term" value="C:TRAPP complex"/>
    <property type="evidence" value="ECO:0000318"/>
    <property type="project" value="GO_Central"/>
</dbReference>
<dbReference type="GO" id="GO:1990070">
    <property type="term" value="C:TRAPPI protein complex"/>
    <property type="evidence" value="ECO:0000266"/>
    <property type="project" value="PomBase"/>
</dbReference>
<dbReference type="GO" id="GO:1990071">
    <property type="term" value="C:TRAPPII protein complex"/>
    <property type="evidence" value="ECO:0000266"/>
    <property type="project" value="PomBase"/>
</dbReference>
<dbReference type="GO" id="GO:1990072">
    <property type="term" value="C:TRAPPIII protein complex"/>
    <property type="evidence" value="ECO:0000266"/>
    <property type="project" value="PomBase"/>
</dbReference>
<dbReference type="GO" id="GO:0006888">
    <property type="term" value="P:endoplasmic reticulum to Golgi vesicle-mediated transport"/>
    <property type="evidence" value="ECO:0000318"/>
    <property type="project" value="GO_Central"/>
</dbReference>
<dbReference type="GO" id="GO:0006891">
    <property type="term" value="P:intra-Golgi vesicle-mediated transport"/>
    <property type="evidence" value="ECO:0000305"/>
    <property type="project" value="PomBase"/>
</dbReference>
<dbReference type="GO" id="GO:0006886">
    <property type="term" value="P:intracellular protein transport"/>
    <property type="evidence" value="ECO:0000305"/>
    <property type="project" value="PomBase"/>
</dbReference>
<dbReference type="GO" id="GO:0016236">
    <property type="term" value="P:macroautophagy"/>
    <property type="evidence" value="ECO:0000305"/>
    <property type="project" value="PomBase"/>
</dbReference>
<dbReference type="CDD" id="cd14944">
    <property type="entry name" value="TRAPPC6A_Trs33"/>
    <property type="match status" value="1"/>
</dbReference>
<dbReference type="Gene3D" id="3.30.1380.20">
    <property type="entry name" value="Trafficking protein particle complex subunit 3"/>
    <property type="match status" value="1"/>
</dbReference>
<dbReference type="InterPro" id="IPR024096">
    <property type="entry name" value="NO_sig/Golgi_transp_ligand-bd"/>
</dbReference>
<dbReference type="InterPro" id="IPR007194">
    <property type="entry name" value="TRAPP_component"/>
</dbReference>
<dbReference type="InterPro" id="IPR037992">
    <property type="entry name" value="TRAPPC6/Trs33"/>
</dbReference>
<dbReference type="PANTHER" id="PTHR12817:SF0">
    <property type="entry name" value="GEO08327P1"/>
    <property type="match status" value="1"/>
</dbReference>
<dbReference type="PANTHER" id="PTHR12817">
    <property type="entry name" value="TRAFFICKING PROTEIN PARTICLE COMPLEX SUBUNIT 6B"/>
    <property type="match status" value="1"/>
</dbReference>
<dbReference type="Pfam" id="PF04051">
    <property type="entry name" value="TRAPP"/>
    <property type="match status" value="1"/>
</dbReference>
<dbReference type="SUPFAM" id="SSF111126">
    <property type="entry name" value="Ligand-binding domain in the NO signalling and Golgi transport"/>
    <property type="match status" value="1"/>
</dbReference>
<gene>
    <name type="ORF">SPAC13G6.05c</name>
</gene>